<sequence>MLLDAGPQYPAIGVTTFGASRHHSAGDVAERDVGLGINPFADGMGAFKLNPSSHELASAGQTAFTSQAPGYAAAAALGHHHHPGHVGSYSSAAFNSTRDFLFRNRGFGDAAAAASAQHSLFAASAGGFGGPHGHTDAAGHLLFPGLHEQAAGHASPNVVNGQMRLGFSGDMYPRPEQYGQVTSPRSEHYAAPQLHGYGPMNVNMAAHHGAGAFFRYMRQPIKQELICKWIEPEQLANPKKSCNKTFSTMHELVTHVTVEHVGGPEQSNHICFWEECPREGKPFKAKYKLVNHIRVHTGEKPFPCPFPGCGKVFARSENLKIHKRTHTGEKPFKCEFEGCDRRFANSSDRKKHMHVHTSDKPYLCKMCDKSYTHPSSLRKHMKVHESSSQGSQPSPAASSGYESSTPPTIVSPSTDNPTTSSLSPSSSAVHHTAGHSALSSNFNEWYV</sequence>
<comment type="function">
    <text evidence="2">Acts as a transcriptional activator. Involved in neurogenesis. Plays important roles in the early stage of organogenesis of the CNS, as well as during dorsal spinal cord development and maturation of the cerebellum. Involved in the spatial distribution of mossy fiber (MF) neurons within the pontine gray nucleus (PGN). Plays a role in the regulation of MF axon pathway choice. Promotes MF migration towards ipsilaterally-located cerebellar territories. May have a role in shear flow mechanotransduction in osteocytes. Retains nuclear GLI1 and GLI3 in the cytoplasm. Binds to the minimal GLI-consensus sequence 5'-TGGGTGGTC-3' (By similarity).</text>
</comment>
<comment type="subunit">
    <text evidence="1">Interacts (via the C2H2-type domains 3, 4 and 5) with MDFIC (via the C2H2-type domains 3, 4 and 5). Interacts with GLI1; the interaction enhances transcription activation. Interacts with GLI2. Interacts with GLI3; the interaction enhances transcription activation (By similarity).</text>
</comment>
<comment type="interaction">
    <interactant intactId="EBI-11963196">
        <id>Q15915</id>
    </interactant>
    <interactant intactId="EBI-12318443">
        <id>Q8NFV4-4</id>
        <label>ABHD11</label>
    </interactant>
    <organismsDiffer>false</organismsDiffer>
    <experiments>3</experiments>
</comment>
<comment type="interaction">
    <interactant intactId="EBI-11963196">
        <id>Q15915</id>
    </interactant>
    <interactant intactId="EBI-357530">
        <id>Q9ULX6</id>
        <label>AKAP8L</label>
    </interactant>
    <organismsDiffer>false</organismsDiffer>
    <experiments>3</experiments>
</comment>
<comment type="interaction">
    <interactant intactId="EBI-11963196">
        <id>Q15915</id>
    </interactant>
    <interactant intactId="EBI-12102070">
        <id>Q9NXR5-2</id>
        <label>ANKRD10</label>
    </interactant>
    <organismsDiffer>false</organismsDiffer>
    <experiments>3</experiments>
</comment>
<comment type="interaction">
    <interactant intactId="EBI-11963196">
        <id>Q15915</id>
    </interactant>
    <interactant intactId="EBI-948603">
        <id>Q03989</id>
        <label>ARID5A</label>
    </interactant>
    <organismsDiffer>false</organismsDiffer>
    <experiments>3</experiments>
</comment>
<comment type="interaction">
    <interactant intactId="EBI-11963196">
        <id>Q15915</id>
    </interactant>
    <interactant intactId="EBI-12811889">
        <id>Q9Y6H3</id>
        <label>ATP23</label>
    </interactant>
    <organismsDiffer>false</organismsDiffer>
    <experiments>3</experiments>
</comment>
<comment type="interaction">
    <interactant intactId="EBI-11963196">
        <id>Q15915</id>
    </interactant>
    <interactant intactId="EBI-10312707">
        <id>Q9NR55</id>
        <label>BATF3</label>
    </interactant>
    <organismsDiffer>false</organismsDiffer>
    <experiments>3</experiments>
</comment>
<comment type="interaction">
    <interactant intactId="EBI-11963196">
        <id>Q15915</id>
    </interactant>
    <interactant intactId="EBI-1805814">
        <id>Q96RK4</id>
        <label>BBS4</label>
    </interactant>
    <organismsDiffer>false</organismsDiffer>
    <experiments>3</experiments>
</comment>
<comment type="interaction">
    <interactant intactId="EBI-11963196">
        <id>Q15915</id>
    </interactant>
    <interactant intactId="EBI-2548012">
        <id>Q9H2G9</id>
        <label>BLZF1</label>
    </interactant>
    <organismsDiffer>false</organismsDiffer>
    <experiments>3</experiments>
</comment>
<comment type="interaction">
    <interactant intactId="EBI-11963196">
        <id>Q15915</id>
    </interactant>
    <interactant intactId="EBI-2802782">
        <id>Q6NVV7</id>
        <label>CDPF1</label>
    </interactant>
    <organismsDiffer>false</organismsDiffer>
    <experiments>3</experiments>
</comment>
<comment type="interaction">
    <interactant intactId="EBI-11963196">
        <id>Q15915</id>
    </interactant>
    <interactant intactId="EBI-718615">
        <id>Q9H5F2</id>
        <label>CFAP68</label>
    </interactant>
    <organismsDiffer>false</organismsDiffer>
    <experiments>3</experiments>
</comment>
<comment type="interaction">
    <interactant intactId="EBI-11963196">
        <id>Q15915</id>
    </interactant>
    <interactant intactId="EBI-748171">
        <id>O43186</id>
        <label>CRX</label>
    </interactant>
    <organismsDiffer>false</organismsDiffer>
    <experiments>3</experiments>
</comment>
<comment type="interaction">
    <interactant intactId="EBI-11963196">
        <id>Q15915</id>
    </interactant>
    <interactant intactId="EBI-3867333">
        <id>A8MQ03</id>
        <label>CYSRT1</label>
    </interactant>
    <organismsDiffer>false</organismsDiffer>
    <experiments>3</experiments>
</comment>
<comment type="interaction">
    <interactant intactId="EBI-11963196">
        <id>Q15915</id>
    </interactant>
    <interactant intactId="EBI-12840152">
        <id>A0PJW8</id>
        <label>DAPL1</label>
    </interactant>
    <organismsDiffer>false</organismsDiffer>
    <experiments>3</experiments>
</comment>
<comment type="interaction">
    <interactant intactId="EBI-11963196">
        <id>Q15915</id>
    </interactant>
    <interactant intactId="EBI-742054">
        <id>Q96D03</id>
        <label>DDIT4L</label>
    </interactant>
    <organismsDiffer>false</organismsDiffer>
    <experiments>3</experiments>
</comment>
<comment type="interaction">
    <interactant intactId="EBI-11963196">
        <id>Q15915</id>
    </interactant>
    <interactant intactId="EBI-12108304">
        <id>Q96AZ1</id>
        <label>EEF1AKMT3</label>
    </interactant>
    <organismsDiffer>false</organismsDiffer>
    <experiments>3</experiments>
</comment>
<comment type="interaction">
    <interactant intactId="EBI-11963196">
        <id>Q15915</id>
    </interactant>
    <interactant intactId="EBI-12193763">
        <id>A1KXE4-2</id>
        <label>FAM168B</label>
    </interactant>
    <organismsDiffer>false</organismsDiffer>
    <experiments>3</experiments>
</comment>
<comment type="interaction">
    <interactant intactId="EBI-11963196">
        <id>Q15915</id>
    </interactant>
    <interactant intactId="EBI-1759806">
        <id>O75593</id>
        <label>FOXH1</label>
    </interactant>
    <organismsDiffer>false</organismsDiffer>
    <experiments>3</experiments>
</comment>
<comment type="interaction">
    <interactant intactId="EBI-11963196">
        <id>Q15915</id>
    </interactant>
    <interactant intactId="EBI-9248152">
        <id>Q86XJ1</id>
        <label>GAS2L3</label>
    </interactant>
    <organismsDiffer>false</organismsDiffer>
    <experiments>3</experiments>
</comment>
<comment type="interaction">
    <interactant intactId="EBI-11963196">
        <id>Q15915</id>
    </interactant>
    <interactant intactId="EBI-748258">
        <id>Q5TA45</id>
        <label>INTS11</label>
    </interactant>
    <organismsDiffer>false</organismsDiffer>
    <experiments>3</experiments>
</comment>
<comment type="interaction">
    <interactant intactId="EBI-11963196">
        <id>Q15915</id>
    </interactant>
    <interactant intactId="EBI-724915">
        <id>Q53HC5</id>
        <label>KLHL26</label>
    </interactant>
    <organismsDiffer>false</organismsDiffer>
    <experiments>3</experiments>
</comment>
<comment type="interaction">
    <interactant intactId="EBI-11963196">
        <id>Q15915</id>
    </interactant>
    <interactant intactId="EBI-948001">
        <id>Q15323</id>
        <label>KRT31</label>
    </interactant>
    <organismsDiffer>false</organismsDiffer>
    <experiments>3</experiments>
</comment>
<comment type="interaction">
    <interactant intactId="EBI-11963196">
        <id>Q15915</id>
    </interactant>
    <interactant intactId="EBI-1047093">
        <id>O76011</id>
        <label>KRT34</label>
    </interactant>
    <organismsDiffer>false</organismsDiffer>
    <experiments>3</experiments>
</comment>
<comment type="interaction">
    <interactant intactId="EBI-11963196">
        <id>Q15915</id>
    </interactant>
    <interactant intactId="EBI-10171774">
        <id>P60410</id>
        <label>KRTAP10-8</label>
    </interactant>
    <organismsDiffer>false</organismsDiffer>
    <experiments>3</experiments>
</comment>
<comment type="interaction">
    <interactant intactId="EBI-11963196">
        <id>Q15915</id>
    </interactant>
    <interactant intactId="EBI-1052037">
        <id>Q8IUC1</id>
        <label>KRTAP11-1</label>
    </interactant>
    <organismsDiffer>false</organismsDiffer>
    <experiments>3</experiments>
</comment>
<comment type="interaction">
    <interactant intactId="EBI-11963196">
        <id>Q15915</id>
    </interactant>
    <interactant intactId="EBI-10210845">
        <id>P59990</id>
        <label>KRTAP12-1</label>
    </interactant>
    <organismsDiffer>false</organismsDiffer>
    <experiments>3</experiments>
</comment>
<comment type="interaction">
    <interactant intactId="EBI-11963196">
        <id>Q15915</id>
    </interactant>
    <interactant intactId="EBI-11953846">
        <id>Q52LG2</id>
        <label>KRTAP13-2</label>
    </interactant>
    <organismsDiffer>false</organismsDiffer>
    <experiments>3</experiments>
</comment>
<comment type="interaction">
    <interactant intactId="EBI-11963196">
        <id>Q15915</id>
    </interactant>
    <interactant intactId="EBI-11992140">
        <id>Q3LI76</id>
        <label>KRTAP15-1</label>
    </interactant>
    <organismsDiffer>false</organismsDiffer>
    <experiments>3</experiments>
</comment>
<comment type="interaction">
    <interactant intactId="EBI-11963196">
        <id>Q15915</id>
    </interactant>
    <interactant intactId="EBI-12811111">
        <id>Q8IUB9</id>
        <label>KRTAP19-1</label>
    </interactant>
    <organismsDiffer>false</organismsDiffer>
    <experiments>3</experiments>
</comment>
<comment type="interaction">
    <interactant intactId="EBI-11963196">
        <id>Q15915</id>
    </interactant>
    <interactant intactId="EBI-12196745">
        <id>Q3LHN2</id>
        <label>KRTAP19-2</label>
    </interactant>
    <organismsDiffer>false</organismsDiffer>
    <experiments>3</experiments>
</comment>
<comment type="interaction">
    <interactant intactId="EBI-11963196">
        <id>Q15915</id>
    </interactant>
    <interactant intactId="EBI-1048945">
        <id>Q3LI72</id>
        <label>KRTAP19-5</label>
    </interactant>
    <organismsDiffer>false</organismsDiffer>
    <experiments>3</experiments>
</comment>
<comment type="interaction">
    <interactant intactId="EBI-11963196">
        <id>Q15915</id>
    </interactant>
    <interactant intactId="EBI-10241353">
        <id>Q3SYF9</id>
        <label>KRTAP19-7</label>
    </interactant>
    <organismsDiffer>false</organismsDiffer>
    <experiments>3</experiments>
</comment>
<comment type="interaction">
    <interactant intactId="EBI-11963196">
        <id>Q15915</id>
    </interactant>
    <interactant intactId="EBI-18395721">
        <id>Q3LI59</id>
        <label>KRTAP21-2</label>
    </interactant>
    <organismsDiffer>false</organismsDiffer>
    <experiments>3</experiments>
</comment>
<comment type="interaction">
    <interactant intactId="EBI-11963196">
        <id>Q15915</id>
    </interactant>
    <interactant intactId="EBI-751260">
        <id>Q9BYR7</id>
        <label>KRTAP3-2</label>
    </interactant>
    <organismsDiffer>false</organismsDiffer>
    <experiments>3</experiments>
</comment>
<comment type="interaction">
    <interactant intactId="EBI-11963196">
        <id>Q15915</id>
    </interactant>
    <interactant intactId="EBI-12111050">
        <id>Q3LI64</id>
        <label>KRTAP6-1</label>
    </interactant>
    <organismsDiffer>false</organismsDiffer>
    <experiments>3</experiments>
</comment>
<comment type="interaction">
    <interactant intactId="EBI-11963196">
        <id>Q15915</id>
    </interactant>
    <interactant intactId="EBI-11962084">
        <id>Q3LI66</id>
        <label>KRTAP6-2</label>
    </interactant>
    <organismsDiffer>false</organismsDiffer>
    <experiments>3</experiments>
</comment>
<comment type="interaction">
    <interactant intactId="EBI-11963196">
        <id>Q15915</id>
    </interactant>
    <interactant intactId="EBI-22311199">
        <id>Q3LI67</id>
        <label>KRTAP6-3</label>
    </interactant>
    <organismsDiffer>false</organismsDiffer>
    <experiments>3</experiments>
</comment>
<comment type="interaction">
    <interactant intactId="EBI-11963196">
        <id>Q15915</id>
    </interactant>
    <interactant intactId="EBI-18394498">
        <id>Q8IUC3</id>
        <label>KRTAP7-1</label>
    </interactant>
    <organismsDiffer>false</organismsDiffer>
    <experiments>3</experiments>
</comment>
<comment type="interaction">
    <interactant intactId="EBI-11963196">
        <id>Q15915</id>
    </interactant>
    <interactant intactId="EBI-10261141">
        <id>Q8IUC2</id>
        <label>KRTAP8-1</label>
    </interactant>
    <organismsDiffer>false</organismsDiffer>
    <experiments>5</experiments>
</comment>
<comment type="interaction">
    <interactant intactId="EBI-11963196">
        <id>Q15915</id>
    </interactant>
    <interactant intactId="EBI-725647">
        <id>Q99732</id>
        <label>LITAF</label>
    </interactant>
    <organismsDiffer>false</organismsDiffer>
    <experiments>3</experiments>
</comment>
<comment type="interaction">
    <interactant intactId="EBI-11963196">
        <id>Q15915</id>
    </interactant>
    <interactant intactId="EBI-716006">
        <id>Q9Y5V3</id>
        <label>MAGED1</label>
    </interactant>
    <organismsDiffer>false</organismsDiffer>
    <experiments>3</experiments>
</comment>
<comment type="interaction">
    <interactant intactId="EBI-11963196">
        <id>Q15915</id>
    </interactant>
    <interactant intactId="EBI-8487781">
        <id>Q8N6F8</id>
        <label>METTL27</label>
    </interactant>
    <organismsDiffer>false</organismsDiffer>
    <experiments>3</experiments>
</comment>
<comment type="interaction">
    <interactant intactId="EBI-11963196">
        <id>Q15915</id>
    </interactant>
    <interactant intactId="EBI-10271199">
        <id>Q8NI38</id>
        <label>NFKBID</label>
    </interactant>
    <organismsDiffer>false</organismsDiffer>
    <experiments>3</experiments>
</comment>
<comment type="interaction">
    <interactant intactId="EBI-11963196">
        <id>Q15915</id>
    </interactant>
    <interactant intactId="EBI-536879">
        <id>O43482</id>
        <label>OIP5</label>
    </interactant>
    <organismsDiffer>false</organismsDiffer>
    <experiments>5</experiments>
</comment>
<comment type="interaction">
    <interactant intactId="EBI-11963196">
        <id>Q15915</id>
    </interactant>
    <interactant intactId="EBI-12813389">
        <id>Q8TDS5</id>
        <label>OXER1</label>
    </interactant>
    <organismsDiffer>false</organismsDiffer>
    <experiments>3</experiments>
</comment>
<comment type="interaction">
    <interactant intactId="EBI-11963196">
        <id>Q15915</id>
    </interactant>
    <interactant intactId="EBI-11022007">
        <id>Q9HBE1-4</id>
        <label>PATZ1</label>
    </interactant>
    <organismsDiffer>false</organismsDiffer>
    <experiments>3</experiments>
</comment>
<comment type="interaction">
    <interactant intactId="EBI-11963196">
        <id>Q15915</id>
    </interactant>
    <interactant intactId="EBI-724639">
        <id>Q9UBV8</id>
        <label>PEF1</label>
    </interactant>
    <organismsDiffer>false</organismsDiffer>
    <experiments>3</experiments>
</comment>
<comment type="interaction">
    <interactant intactId="EBI-11963196">
        <id>Q15915</id>
    </interactant>
    <interactant intactId="EBI-12387058">
        <id>Q9HDD0</id>
        <label>PLAAT1</label>
    </interactant>
    <organismsDiffer>false</organismsDiffer>
    <experiments>3</experiments>
</comment>
<comment type="interaction">
    <interactant intactId="EBI-11963196">
        <id>Q15915</id>
    </interactant>
    <interactant intactId="EBI-750734">
        <id>Q9NRY6</id>
        <label>PLSCR3</label>
    </interactant>
    <organismsDiffer>false</organismsDiffer>
    <experiments>3</experiments>
</comment>
<comment type="interaction">
    <interactant intactId="EBI-11963196">
        <id>Q15915</id>
    </interactant>
    <interactant intactId="EBI-740343">
        <id>Q93062-3</id>
        <label>RBPMS</label>
    </interactant>
    <organismsDiffer>false</organismsDiffer>
    <experiments>3</experiments>
</comment>
<comment type="interaction">
    <interactant intactId="EBI-11963196">
        <id>Q15915</id>
    </interactant>
    <interactant intactId="EBI-10829018">
        <id>Q04864-2</id>
        <label>REL</label>
    </interactant>
    <organismsDiffer>false</organismsDiffer>
    <experiments>3</experiments>
</comment>
<comment type="interaction">
    <interactant intactId="EBI-11963196">
        <id>Q15915</id>
    </interactant>
    <interactant intactId="EBI-12936957">
        <id>P35250-2</id>
        <label>RFC2</label>
    </interactant>
    <organismsDiffer>false</organismsDiffer>
    <experiments>3</experiments>
</comment>
<comment type="interaction">
    <interactant intactId="EBI-11963196">
        <id>Q15915</id>
    </interactant>
    <interactant intactId="EBI-6257312">
        <id>Q9BVN2</id>
        <label>RUSC1</label>
    </interactant>
    <organismsDiffer>false</organismsDiffer>
    <experiments>3</experiments>
</comment>
<comment type="interaction">
    <interactant intactId="EBI-11963196">
        <id>Q15915</id>
    </interactant>
    <interactant intactId="EBI-347263">
        <id>Q13485</id>
        <label>SMAD4</label>
    </interactant>
    <organismsDiffer>false</organismsDiffer>
    <experiments>3</experiments>
</comment>
<comment type="interaction">
    <interactant intactId="EBI-11963196">
        <id>Q15915</id>
    </interactant>
    <interactant intactId="EBI-12275818">
        <id>Q53HV7-2</id>
        <label>SMUG1</label>
    </interactant>
    <organismsDiffer>false</organismsDiffer>
    <experiments>3</experiments>
</comment>
<comment type="interaction">
    <interactant intactId="EBI-11963196">
        <id>Q15915</id>
    </interactant>
    <interactant intactId="EBI-347919">
        <id>Q9H7B4</id>
        <label>SMYD3</label>
    </interactant>
    <organismsDiffer>false</organismsDiffer>
    <experiments>3</experiments>
</comment>
<comment type="interaction">
    <interactant intactId="EBI-11963196">
        <id>Q15915</id>
    </interactant>
    <interactant intactId="EBI-11959123">
        <id>Q99932-2</id>
        <label>SPAG8</label>
    </interactant>
    <organismsDiffer>false</organismsDiffer>
    <experiments>5</experiments>
</comment>
<comment type="interaction">
    <interactant intactId="EBI-11963196">
        <id>Q15915</id>
    </interactant>
    <interactant intactId="EBI-3923692">
        <id>Q496A3</id>
        <label>SPATS1</label>
    </interactant>
    <organismsDiffer>false</organismsDiffer>
    <experiments>3</experiments>
</comment>
<comment type="interaction">
    <interactant intactId="EBI-11963196">
        <id>Q15915</id>
    </interactant>
    <interactant intactId="EBI-740595">
        <id>Q9UMX1</id>
        <label>SUFU</label>
    </interactant>
    <organismsDiffer>false</organismsDiffer>
    <experiments>3</experiments>
</comment>
<comment type="interaction">
    <interactant intactId="EBI-11963196">
        <id>Q15915</id>
    </interactant>
    <interactant intactId="EBI-12096770">
        <id>O60806</id>
        <label>TBX19</label>
    </interactant>
    <organismsDiffer>false</organismsDiffer>
    <experiments>3</experiments>
</comment>
<comment type="interaction">
    <interactant intactId="EBI-11963196">
        <id>Q15915</id>
    </interactant>
    <interactant intactId="EBI-11139477">
        <id>Q96N21</id>
        <label>TEPSIN</label>
    </interactant>
    <organismsDiffer>false</organismsDiffer>
    <experiments>3</experiments>
</comment>
<comment type="interaction">
    <interactant intactId="EBI-11963196">
        <id>Q15915</id>
    </interactant>
    <interactant intactId="EBI-11741437">
        <id>Q08117-2</id>
        <label>TLE5</label>
    </interactant>
    <organismsDiffer>false</organismsDiffer>
    <experiments>3</experiments>
</comment>
<comment type="interaction">
    <interactant intactId="EBI-11963196">
        <id>Q15915</id>
    </interactant>
    <interactant intactId="EBI-359224">
        <id>Q13077</id>
        <label>TRAF1</label>
    </interactant>
    <organismsDiffer>false</organismsDiffer>
    <experiments>3</experiments>
</comment>
<comment type="interaction">
    <interactant intactId="EBI-11963196">
        <id>Q15915</id>
    </interactant>
    <interactant intactId="EBI-742327">
        <id>Q15654</id>
        <label>TRIP6</label>
    </interactant>
    <organismsDiffer>false</organismsDiffer>
    <experiments>3</experiments>
</comment>
<comment type="interaction">
    <interactant intactId="EBI-11963196">
        <id>Q15915</id>
    </interactant>
    <interactant intactId="EBI-12806590">
        <id>Q86WV8</id>
        <label>TSC1</label>
    </interactant>
    <organismsDiffer>false</organismsDiffer>
    <experiments>3</experiments>
</comment>
<comment type="interaction">
    <interactant intactId="EBI-11963196">
        <id>Q15915</id>
    </interactant>
    <interactant intactId="EBI-10180829">
        <id>Q7KZS0</id>
        <label>UBE2I</label>
    </interactant>
    <organismsDiffer>false</organismsDiffer>
    <experiments>3</experiments>
</comment>
<comment type="interaction">
    <interactant intactId="EBI-11963196">
        <id>Q15915</id>
    </interactant>
    <interactant intactId="EBI-12068150">
        <id>Q6NVU6</id>
        <label>UFSP1</label>
    </interactant>
    <organismsDiffer>false</organismsDiffer>
    <experiments>3</experiments>
</comment>
<comment type="interaction">
    <interactant intactId="EBI-11963196">
        <id>Q15915</id>
    </interactant>
    <interactant intactId="EBI-12040603">
        <id>Q9NZC7-5</id>
        <label>WWOX</label>
    </interactant>
    <organismsDiffer>false</organismsDiffer>
    <experiments>3</experiments>
</comment>
<comment type="interaction">
    <interactant intactId="EBI-11963196">
        <id>Q15915</id>
    </interactant>
    <interactant intactId="EBI-17269964">
        <id>Q6S9Z5</id>
        <label>ZNF474</label>
    </interactant>
    <organismsDiffer>false</organismsDiffer>
    <experiments>3</experiments>
</comment>
<comment type="interaction">
    <interactant intactId="EBI-11963196">
        <id>Q15915</id>
    </interactant>
    <interactant intactId="EBI-4395669">
        <id>Q6ZNG0</id>
        <label>ZNF620</label>
    </interactant>
    <organismsDiffer>false</organismsDiffer>
    <experiments>3</experiments>
</comment>
<comment type="subcellular location">
    <subcellularLocation>
        <location>Nucleus</location>
    </subcellularLocation>
    <subcellularLocation>
        <location evidence="1">Cytoplasm</location>
    </subcellularLocation>
    <text evidence="1">Localizes in the cytoplasm in presence of MDFIC overexpression.</text>
</comment>
<comment type="tissue specificity">
    <text evidence="7">CNS. A high level expression is seen in the cerebellum. Detected in the nuclei of the cerebellar granule cell lineage from the progenitor cells of the external germinal layer to the postmigrated cells of the internal granular layer. Detected in medulloblastoma (26/29 cases), but not present in all other tumors examined.</text>
</comment>
<comment type="domain">
    <text evidence="1">The C2H2-type 3, 4 and 5 zinc finger domains are necessary for transcription activation.</text>
</comment>
<comment type="disease" evidence="5">
    <disease id="DI-04561">
        <name>Craniosynostosis 6</name>
        <acronym>CRS6</acronym>
        <description>A form of craniosynostosis, a primary abnormality of skull growth involving premature fusion of one or more cranial sutures. The growth velocity of the skull often cannot match that of the developing brain resulting in an abnormal head shape and, in some cases, increased intracranial pressure, which must be treated promptly to avoid permanent neurodevelopmental disability.</description>
        <dbReference type="MIM" id="616602"/>
    </disease>
    <text>The disease is caused by variants affecting the gene represented in this entry.</text>
</comment>
<comment type="disease" evidence="5 6">
    <disease id="DI-05736">
        <name>Structural brain anomalies with impaired intellectual development and craniosynostosis</name>
        <acronym>BAIDCS</acronym>
        <description>A disease characterized by microcephaly, agenesis of corpus callosum, abnormal conformation of the ventricles and posterior fossa, hypoplasia of both cerebellar hemispheres, colpocephaly, and partial absence of the cerebellar vermis with fusion of the cerebellar hemispheres. Intellectual development is moderately to severely impaired. Bicoronal synostosis, scoliosis, and tethered cord may be present.</description>
        <dbReference type="MIM" id="618736"/>
    </disease>
    <text>The disease is caused by variants affecting the gene represented in this entry.</text>
</comment>
<comment type="similarity">
    <text evidence="8">Belongs to the GLI C2H2-type zinc-finger protein family.</text>
</comment>
<keyword id="KW-0010">Activator</keyword>
<keyword id="KW-0989">Craniosynostosis</keyword>
<keyword id="KW-0963">Cytoplasm</keyword>
<keyword id="KW-0217">Developmental protein</keyword>
<keyword id="KW-0221">Differentiation</keyword>
<keyword id="KW-0225">Disease variant</keyword>
<keyword id="KW-0238">DNA-binding</keyword>
<keyword id="KW-0991">Intellectual disability</keyword>
<keyword id="KW-0479">Metal-binding</keyword>
<keyword id="KW-0524">Neurogenesis</keyword>
<keyword id="KW-0539">Nucleus</keyword>
<keyword id="KW-1267">Proteomics identification</keyword>
<keyword id="KW-1185">Reference proteome</keyword>
<keyword id="KW-0677">Repeat</keyword>
<keyword id="KW-0804">Transcription</keyword>
<keyword id="KW-0805">Transcription regulation</keyword>
<keyword id="KW-0862">Zinc</keyword>
<keyword id="KW-0863">Zinc-finger</keyword>
<reference key="1">
    <citation type="journal article" date="1996" name="Cancer Res.">
        <title>Predominant expression of human zic in cerebellar granule cell lineage and medulloblastoma.</title>
        <authorList>
            <person name="Yokota N."/>
            <person name="Aruga J."/>
            <person name="Takai S."/>
            <person name="Yamada K."/>
            <person name="Hamazaki M."/>
            <person name="Iwase T."/>
            <person name="Sugimura H."/>
            <person name="Mikoshiba K."/>
        </authorList>
    </citation>
    <scope>NUCLEOTIDE SEQUENCE [MRNA]</scope>
    <scope>TISSUE SPECIFICITY</scope>
    <source>
        <tissue>Cerebellum</tissue>
    </source>
</reference>
<reference key="2">
    <citation type="submission" date="2005-09" db="EMBL/GenBank/DDBJ databases">
        <authorList>
            <person name="Mural R.J."/>
            <person name="Istrail S."/>
            <person name="Sutton G.G."/>
            <person name="Florea L."/>
            <person name="Halpern A.L."/>
            <person name="Mobarry C.M."/>
            <person name="Lippert R."/>
            <person name="Walenz B."/>
            <person name="Shatkay H."/>
            <person name="Dew I."/>
            <person name="Miller J.R."/>
            <person name="Flanigan M.J."/>
            <person name="Edwards N.J."/>
            <person name="Bolanos R."/>
            <person name="Fasulo D."/>
            <person name="Halldorsson B.V."/>
            <person name="Hannenhalli S."/>
            <person name="Turner R."/>
            <person name="Yooseph S."/>
            <person name="Lu F."/>
            <person name="Nusskern D.R."/>
            <person name="Shue B.C."/>
            <person name="Zheng X.H."/>
            <person name="Zhong F."/>
            <person name="Delcher A.L."/>
            <person name="Huson D.H."/>
            <person name="Kravitz S.A."/>
            <person name="Mouchard L."/>
            <person name="Reinert K."/>
            <person name="Remington K.A."/>
            <person name="Clark A.G."/>
            <person name="Waterman M.S."/>
            <person name="Eichler E.E."/>
            <person name="Adams M.D."/>
            <person name="Hunkapiller M.W."/>
            <person name="Myers E.W."/>
            <person name="Venter J.C."/>
        </authorList>
    </citation>
    <scope>NUCLEOTIDE SEQUENCE [LARGE SCALE GENOMIC DNA]</scope>
</reference>
<reference key="3">
    <citation type="journal article" date="2004" name="Genome Res.">
        <title>The status, quality, and expansion of the NIH full-length cDNA project: the Mammalian Gene Collection (MGC).</title>
        <authorList>
            <consortium name="The MGC Project Team"/>
        </authorList>
    </citation>
    <scope>NUCLEOTIDE SEQUENCE [LARGE SCALE MRNA]</scope>
    <source>
        <tissue>Liver</tissue>
    </source>
</reference>
<reference key="4">
    <citation type="journal article" date="2015" name="Am. J. Hum. Genet.">
        <title>Gain-of-function mutations in ZIC1 are associated with coronal craniosynostosis and learning disability.</title>
        <authorList>
            <consortium name="WGS500 Consortium"/>
            <person name="Twigg S.R."/>
            <person name="Forecki J."/>
            <person name="Goos J.A."/>
            <person name="Richardson I.C."/>
            <person name="Hoogeboom A.J."/>
            <person name="van den Ouweland A.M."/>
            <person name="Swagemakers S.M."/>
            <person name="Lequin M.H."/>
            <person name="Van Antwerp D."/>
            <person name="McGowan S.J."/>
            <person name="Westbury I."/>
            <person name="Miller K.A."/>
            <person name="Wall S.A."/>
            <person name="van der Spek P.J."/>
            <person name="Mathijssen I.M."/>
            <person name="Pauws E."/>
            <person name="Merzdorf C.S."/>
            <person name="Wilkie A.O."/>
        </authorList>
    </citation>
    <scope>INVOLVEMENT IN CRS6</scope>
    <scope>VARIANT CRS6 ARG-400</scope>
    <scope>INVOLVEMENT IN BAIDCS</scope>
    <scope>VARIANTS BAIDCS 388-SER--VAL-447 DEL; 389-GLN--VAL-447 DEL AND 402-GLU--VAL-447 DEL</scope>
    <scope>VARIANT ALA-414</scope>
</reference>
<reference key="5">
    <citation type="journal article" date="2018" name="Eur. J. Med. Genet.">
        <title>Mutated zinc finger protein of the cerebellum 1 leads to microcephaly, cortical malformation, callosal agenesis, cerebellar dysplasia, tethered cord and scoliosis.</title>
        <authorList>
            <person name="Vandervore L.V."/>
            <person name="Schot R."/>
            <person name="Hoogeboom A.J.M."/>
            <person name="Lincke C."/>
            <person name="de Coo I.F."/>
            <person name="Lequin M.H."/>
            <person name="Dremmen M."/>
            <person name="van Unen L.M.A."/>
            <person name="Saris J.J."/>
            <person name="Jansen A.C."/>
            <person name="van Slegtenhorst M.A."/>
            <person name="Wilke M."/>
            <person name="Mancini G.M.S."/>
        </authorList>
    </citation>
    <scope>INVOLVEMENT IN BAIDCS</scope>
</reference>
<gene>
    <name type="primary">ZIC1</name>
    <name type="synonym">ZIC</name>
    <name type="synonym">ZNF201</name>
</gene>
<name>ZIC1_HUMAN</name>
<protein>
    <recommendedName>
        <fullName>Zinc finger protein ZIC 1</fullName>
    </recommendedName>
    <alternativeName>
        <fullName>Zinc finger protein 201</fullName>
    </alternativeName>
    <alternativeName>
        <fullName>Zinc finger protein of the cerebellum 1</fullName>
    </alternativeName>
</protein>
<proteinExistence type="evidence at protein level"/>
<organism>
    <name type="scientific">Homo sapiens</name>
    <name type="common">Human</name>
    <dbReference type="NCBI Taxonomy" id="9606"/>
    <lineage>
        <taxon>Eukaryota</taxon>
        <taxon>Metazoa</taxon>
        <taxon>Chordata</taxon>
        <taxon>Craniata</taxon>
        <taxon>Vertebrata</taxon>
        <taxon>Euteleostomi</taxon>
        <taxon>Mammalia</taxon>
        <taxon>Eutheria</taxon>
        <taxon>Euarchontoglires</taxon>
        <taxon>Primates</taxon>
        <taxon>Haplorrhini</taxon>
        <taxon>Catarrhini</taxon>
        <taxon>Hominidae</taxon>
        <taxon>Homo</taxon>
    </lineage>
</organism>
<evidence type="ECO:0000250" key="1"/>
<evidence type="ECO:0000250" key="2">
    <source>
        <dbReference type="UniProtKB" id="P46684"/>
    </source>
</evidence>
<evidence type="ECO:0000255" key="3">
    <source>
        <dbReference type="PROSITE-ProRule" id="PRU00042"/>
    </source>
</evidence>
<evidence type="ECO:0000256" key="4">
    <source>
        <dbReference type="SAM" id="MobiDB-lite"/>
    </source>
</evidence>
<evidence type="ECO:0000269" key="5">
    <source>
    </source>
</evidence>
<evidence type="ECO:0000269" key="6">
    <source>
    </source>
</evidence>
<evidence type="ECO:0000269" key="7">
    <source>
    </source>
</evidence>
<evidence type="ECO:0000305" key="8"/>
<feature type="chain" id="PRO_0000047244" description="Zinc finger protein ZIC 1">
    <location>
        <begin position="1"/>
        <end position="447"/>
    </location>
</feature>
<feature type="zinc finger region" description="C2H2-type 1; atypical" evidence="3">
    <location>
        <begin position="225"/>
        <end position="260"/>
    </location>
</feature>
<feature type="zinc finger region" description="C2H2-type 2; atypical" evidence="3">
    <location>
        <begin position="269"/>
        <end position="296"/>
    </location>
</feature>
<feature type="zinc finger region" description="C2H2-type 3" evidence="3">
    <location>
        <begin position="302"/>
        <end position="326"/>
    </location>
</feature>
<feature type="zinc finger region" description="C2H2-type 4" evidence="3">
    <location>
        <begin position="332"/>
        <end position="356"/>
    </location>
</feature>
<feature type="zinc finger region" description="C2H2-type 5" evidence="3">
    <location>
        <begin position="362"/>
        <end position="384"/>
    </location>
</feature>
<feature type="region of interest" description="Disordered" evidence="4">
    <location>
        <begin position="375"/>
        <end position="431"/>
    </location>
</feature>
<feature type="compositionally biased region" description="Low complexity" evidence="4">
    <location>
        <begin position="386"/>
        <end position="427"/>
    </location>
</feature>
<feature type="sequence variant" id="VAR_083723" description="In BAIDCS." evidence="5">
    <location>
        <begin position="388"/>
        <end position="447"/>
    </location>
</feature>
<feature type="sequence variant" id="VAR_083724" description="In BAIDCS." evidence="5">
    <location>
        <begin position="389"/>
        <end position="447"/>
    </location>
</feature>
<feature type="sequence variant" id="VAR_075867" description="In CRS6; dbSNP:rs1057517670." evidence="5">
    <original>G</original>
    <variation>R</variation>
    <location>
        <position position="400"/>
    </location>
</feature>
<feature type="sequence variant" id="VAR_083725" description="In BAIDCS." evidence="5">
    <location>
        <begin position="402"/>
        <end position="447"/>
    </location>
</feature>
<feature type="sequence variant" id="VAR_075868" description="In dbSNP:rs143292136." evidence="5">
    <original>T</original>
    <variation>A</variation>
    <location>
        <position position="414"/>
    </location>
</feature>
<feature type="sequence conflict" description="In Ref. 1; BAA11179." evidence="8" ref="1">
    <original>L</original>
    <variation>V</variation>
    <location>
        <position position="377"/>
    </location>
</feature>
<accession>Q15915</accession>
<accession>Q2M3N1</accession>
<dbReference type="EMBL" id="D76435">
    <property type="protein sequence ID" value="BAA11179.1"/>
    <property type="molecule type" value="mRNA"/>
</dbReference>
<dbReference type="EMBL" id="CH471052">
    <property type="protein sequence ID" value="EAW78915.1"/>
    <property type="molecule type" value="Genomic_DNA"/>
</dbReference>
<dbReference type="EMBL" id="BC104848">
    <property type="protein sequence ID" value="AAI04849.1"/>
    <property type="molecule type" value="mRNA"/>
</dbReference>
<dbReference type="EMBL" id="BC104850">
    <property type="protein sequence ID" value="AAI04851.1"/>
    <property type="molecule type" value="mRNA"/>
</dbReference>
<dbReference type="CCDS" id="CCDS3136.1"/>
<dbReference type="RefSeq" id="NP_003403.2">
    <property type="nucleotide sequence ID" value="NM_003412.3"/>
</dbReference>
<dbReference type="SMR" id="Q15915"/>
<dbReference type="BioGRID" id="113377">
    <property type="interactions" value="116"/>
</dbReference>
<dbReference type="FunCoup" id="Q15915">
    <property type="interactions" value="2098"/>
</dbReference>
<dbReference type="IntAct" id="Q15915">
    <property type="interactions" value="112"/>
</dbReference>
<dbReference type="STRING" id="9606.ENSP00000282928"/>
<dbReference type="iPTMnet" id="Q15915"/>
<dbReference type="PhosphoSitePlus" id="Q15915"/>
<dbReference type="BioMuta" id="ZIC1"/>
<dbReference type="DMDM" id="209572702"/>
<dbReference type="jPOST" id="Q15915"/>
<dbReference type="MassIVE" id="Q15915"/>
<dbReference type="PaxDb" id="9606-ENSP00000282928"/>
<dbReference type="PeptideAtlas" id="Q15915"/>
<dbReference type="ProteomicsDB" id="60816"/>
<dbReference type="Pumba" id="Q15915"/>
<dbReference type="Antibodypedia" id="1317">
    <property type="antibodies" value="418 antibodies from 34 providers"/>
</dbReference>
<dbReference type="DNASU" id="7545"/>
<dbReference type="Ensembl" id="ENST00000282928.5">
    <property type="protein sequence ID" value="ENSP00000282928.4"/>
    <property type="gene ID" value="ENSG00000152977.10"/>
</dbReference>
<dbReference type="GeneID" id="7545"/>
<dbReference type="KEGG" id="hsa:7545"/>
<dbReference type="MANE-Select" id="ENST00000282928.5">
    <property type="protein sequence ID" value="ENSP00000282928.4"/>
    <property type="RefSeq nucleotide sequence ID" value="NM_003412.4"/>
    <property type="RefSeq protein sequence ID" value="NP_003403.2"/>
</dbReference>
<dbReference type="UCSC" id="uc003ewe.4">
    <property type="organism name" value="human"/>
</dbReference>
<dbReference type="AGR" id="HGNC:12872"/>
<dbReference type="CTD" id="7545"/>
<dbReference type="DisGeNET" id="7545"/>
<dbReference type="GeneCards" id="ZIC1"/>
<dbReference type="HGNC" id="HGNC:12872">
    <property type="gene designation" value="ZIC1"/>
</dbReference>
<dbReference type="HPA" id="ENSG00000152977">
    <property type="expression patterns" value="Tissue enriched (brain)"/>
</dbReference>
<dbReference type="MalaCards" id="ZIC1"/>
<dbReference type="MIM" id="600470">
    <property type="type" value="gene"/>
</dbReference>
<dbReference type="MIM" id="616602">
    <property type="type" value="phenotype"/>
</dbReference>
<dbReference type="MIM" id="618736">
    <property type="type" value="phenotype"/>
</dbReference>
<dbReference type="neXtProt" id="NX_Q15915"/>
<dbReference type="OpenTargets" id="ENSG00000152977"/>
<dbReference type="Orphanet" id="269212">
    <property type="disease" value="Isolated Dandy-Walker malformation with hydrocephalus"/>
</dbReference>
<dbReference type="Orphanet" id="269215">
    <property type="disease" value="Isolated Dandy-Walker malformation without hydrocephalus"/>
</dbReference>
<dbReference type="Orphanet" id="35099">
    <property type="disease" value="Non-syndromic bicoronal craniosynostosis"/>
</dbReference>
<dbReference type="PharmGKB" id="PA37461"/>
<dbReference type="VEuPathDB" id="HostDB:ENSG00000152977"/>
<dbReference type="eggNOG" id="KOG1721">
    <property type="taxonomic scope" value="Eukaryota"/>
</dbReference>
<dbReference type="GeneTree" id="ENSGT00940000160269"/>
<dbReference type="HOGENOM" id="CLU_002678_37_1_1"/>
<dbReference type="InParanoid" id="Q15915"/>
<dbReference type="OMA" id="MKVHSKS"/>
<dbReference type="OrthoDB" id="3214149at2759"/>
<dbReference type="PAN-GO" id="Q15915">
    <property type="GO annotations" value="5 GO annotations based on evolutionary models"/>
</dbReference>
<dbReference type="PhylomeDB" id="Q15915"/>
<dbReference type="TreeFam" id="TF351425"/>
<dbReference type="PathwayCommons" id="Q15915"/>
<dbReference type="Reactome" id="R-HSA-9834899">
    <property type="pathway name" value="Specification of the neural plate border"/>
</dbReference>
<dbReference type="Reactome" id="R-HSA-9856649">
    <property type="pathway name" value="Transcriptional and post-translational regulation of MITF-M expression and activity"/>
</dbReference>
<dbReference type="SignaLink" id="Q15915"/>
<dbReference type="SIGNOR" id="Q15915"/>
<dbReference type="BioGRID-ORCS" id="7545">
    <property type="hits" value="13 hits in 1173 CRISPR screens"/>
</dbReference>
<dbReference type="ChiTaRS" id="ZIC1">
    <property type="organism name" value="human"/>
</dbReference>
<dbReference type="GeneWiki" id="ZIC1"/>
<dbReference type="GenomeRNAi" id="7545"/>
<dbReference type="Pharos" id="Q15915">
    <property type="development level" value="Tbio"/>
</dbReference>
<dbReference type="PRO" id="PR:Q15915"/>
<dbReference type="Proteomes" id="UP000005640">
    <property type="component" value="Chromosome 3"/>
</dbReference>
<dbReference type="RNAct" id="Q15915">
    <property type="molecule type" value="protein"/>
</dbReference>
<dbReference type="Bgee" id="ENSG00000152977">
    <property type="expression patterns" value="Expressed in paraflocculus and 144 other cell types or tissues"/>
</dbReference>
<dbReference type="ExpressionAtlas" id="Q15915">
    <property type="expression patterns" value="baseline and differential"/>
</dbReference>
<dbReference type="GO" id="GO:0005737">
    <property type="term" value="C:cytoplasm"/>
    <property type="evidence" value="ECO:0007669"/>
    <property type="project" value="UniProtKB-SubCell"/>
</dbReference>
<dbReference type="GO" id="GO:0005654">
    <property type="term" value="C:nucleoplasm"/>
    <property type="evidence" value="ECO:0000314"/>
    <property type="project" value="HPA"/>
</dbReference>
<dbReference type="GO" id="GO:0005634">
    <property type="term" value="C:nucleus"/>
    <property type="evidence" value="ECO:0000314"/>
    <property type="project" value="UniProtKB"/>
</dbReference>
<dbReference type="GO" id="GO:0001228">
    <property type="term" value="F:DNA-binding transcription activator activity, RNA polymerase II-specific"/>
    <property type="evidence" value="ECO:0007669"/>
    <property type="project" value="Ensembl"/>
</dbReference>
<dbReference type="GO" id="GO:0003700">
    <property type="term" value="F:DNA-binding transcription factor activity"/>
    <property type="evidence" value="ECO:0000250"/>
    <property type="project" value="UniProtKB"/>
</dbReference>
<dbReference type="GO" id="GO:0000981">
    <property type="term" value="F:DNA-binding transcription factor activity, RNA polymerase II-specific"/>
    <property type="evidence" value="ECO:0000318"/>
    <property type="project" value="GO_Central"/>
</dbReference>
<dbReference type="GO" id="GO:0000978">
    <property type="term" value="F:RNA polymerase II cis-regulatory region sequence-specific DNA binding"/>
    <property type="evidence" value="ECO:0000318"/>
    <property type="project" value="GO_Central"/>
</dbReference>
<dbReference type="GO" id="GO:1990837">
    <property type="term" value="F:sequence-specific double-stranded DNA binding"/>
    <property type="evidence" value="ECO:0000314"/>
    <property type="project" value="ARUK-UCL"/>
</dbReference>
<dbReference type="GO" id="GO:0008270">
    <property type="term" value="F:zinc ion binding"/>
    <property type="evidence" value="ECO:0007669"/>
    <property type="project" value="UniProtKB-KW"/>
</dbReference>
<dbReference type="GO" id="GO:0007628">
    <property type="term" value="P:adult walking behavior"/>
    <property type="evidence" value="ECO:0007669"/>
    <property type="project" value="Ensembl"/>
</dbReference>
<dbReference type="GO" id="GO:0007420">
    <property type="term" value="P:brain development"/>
    <property type="evidence" value="ECO:0000314"/>
    <property type="project" value="UniProtKB"/>
</dbReference>
<dbReference type="GO" id="GO:0030154">
    <property type="term" value="P:cell differentiation"/>
    <property type="evidence" value="ECO:0007669"/>
    <property type="project" value="UniProtKB-KW"/>
</dbReference>
<dbReference type="GO" id="GO:0007417">
    <property type="term" value="P:central nervous system development"/>
    <property type="evidence" value="ECO:0000318"/>
    <property type="project" value="GO_Central"/>
</dbReference>
<dbReference type="GO" id="GO:0010467">
    <property type="term" value="P:gene expression"/>
    <property type="evidence" value="ECO:0007669"/>
    <property type="project" value="Ensembl"/>
</dbReference>
<dbReference type="GO" id="GO:0021766">
    <property type="term" value="P:hippocampus development"/>
    <property type="evidence" value="ECO:0007669"/>
    <property type="project" value="Ensembl"/>
</dbReference>
<dbReference type="GO" id="GO:0042472">
    <property type="term" value="P:inner ear morphogenesis"/>
    <property type="evidence" value="ECO:0000250"/>
    <property type="project" value="UniProtKB"/>
</dbReference>
<dbReference type="GO" id="GO:0098727">
    <property type="term" value="P:maintenance of cell number"/>
    <property type="evidence" value="ECO:0007669"/>
    <property type="project" value="Ensembl"/>
</dbReference>
<dbReference type="GO" id="GO:0021772">
    <property type="term" value="P:olfactory bulb development"/>
    <property type="evidence" value="ECO:0007669"/>
    <property type="project" value="Ensembl"/>
</dbReference>
<dbReference type="GO" id="GO:0007389">
    <property type="term" value="P:pattern specification process"/>
    <property type="evidence" value="ECO:0000250"/>
    <property type="project" value="UniProtKB"/>
</dbReference>
<dbReference type="GO" id="GO:0045893">
    <property type="term" value="P:positive regulation of DNA-templated transcription"/>
    <property type="evidence" value="ECO:0000250"/>
    <property type="project" value="UniProtKB"/>
</dbReference>
<dbReference type="GO" id="GO:0042307">
    <property type="term" value="P:positive regulation of protein import into nucleus"/>
    <property type="evidence" value="ECO:0000250"/>
    <property type="project" value="UniProtKB"/>
</dbReference>
<dbReference type="GO" id="GO:0008589">
    <property type="term" value="P:regulation of smoothened signaling pathway"/>
    <property type="evidence" value="ECO:0000250"/>
    <property type="project" value="UniProtKB"/>
</dbReference>
<dbReference type="GO" id="GO:0006357">
    <property type="term" value="P:regulation of transcription by RNA polymerase II"/>
    <property type="evidence" value="ECO:0000318"/>
    <property type="project" value="GO_Central"/>
</dbReference>
<dbReference type="GO" id="GO:0021510">
    <property type="term" value="P:spinal cord development"/>
    <property type="evidence" value="ECO:0007669"/>
    <property type="project" value="Ensembl"/>
</dbReference>
<dbReference type="FunFam" id="3.30.160.60:FF:000035">
    <property type="entry name" value="Zinc finger protein ZIC 1"/>
    <property type="match status" value="1"/>
</dbReference>
<dbReference type="FunFam" id="3.30.160.60:FF:000039">
    <property type="entry name" value="Zinc finger protein ZIC 1"/>
    <property type="match status" value="1"/>
</dbReference>
<dbReference type="FunFam" id="3.30.160.60:FF:000041">
    <property type="entry name" value="Zinc finger protein ZIC 1"/>
    <property type="match status" value="1"/>
</dbReference>
<dbReference type="FunFam" id="3.30.160.60:FF:001330">
    <property type="entry name" value="Zinc finger protein ZIC 4"/>
    <property type="match status" value="1"/>
</dbReference>
<dbReference type="Gene3D" id="3.30.160.60">
    <property type="entry name" value="Classic Zinc Finger"/>
    <property type="match status" value="4"/>
</dbReference>
<dbReference type="InterPro" id="IPR043359">
    <property type="entry name" value="GLI-like"/>
</dbReference>
<dbReference type="InterPro" id="IPR056436">
    <property type="entry name" value="Znf-C2H2_ZIC1-5/GLI1-3-like"/>
</dbReference>
<dbReference type="InterPro" id="IPR036236">
    <property type="entry name" value="Znf_C2H2_sf"/>
</dbReference>
<dbReference type="InterPro" id="IPR013087">
    <property type="entry name" value="Znf_C2H2_type"/>
</dbReference>
<dbReference type="InterPro" id="IPR041643">
    <property type="entry name" value="Znf_ZIC"/>
</dbReference>
<dbReference type="PANTHER" id="PTHR45718:SF8">
    <property type="entry name" value="GLIS FAMILY ZINC FINGER 2"/>
    <property type="match status" value="1"/>
</dbReference>
<dbReference type="PANTHER" id="PTHR45718">
    <property type="entry name" value="TRANSCRIPTIONAL ACTIVATOR CUBITUS INTERRUPTUS"/>
    <property type="match status" value="1"/>
</dbReference>
<dbReference type="Pfam" id="PF00096">
    <property type="entry name" value="zf-C2H2"/>
    <property type="match status" value="3"/>
</dbReference>
<dbReference type="Pfam" id="PF23561">
    <property type="entry name" value="zf-C2H2_15"/>
    <property type="match status" value="1"/>
</dbReference>
<dbReference type="Pfam" id="PF18366">
    <property type="entry name" value="zf_ZIC"/>
    <property type="match status" value="1"/>
</dbReference>
<dbReference type="SMART" id="SM00355">
    <property type="entry name" value="ZnF_C2H2"/>
    <property type="match status" value="5"/>
</dbReference>
<dbReference type="SUPFAM" id="SSF57667">
    <property type="entry name" value="beta-beta-alpha zinc fingers"/>
    <property type="match status" value="2"/>
</dbReference>
<dbReference type="PROSITE" id="PS00028">
    <property type="entry name" value="ZINC_FINGER_C2H2_1"/>
    <property type="match status" value="3"/>
</dbReference>
<dbReference type="PROSITE" id="PS50157">
    <property type="entry name" value="ZINC_FINGER_C2H2_2"/>
    <property type="match status" value="4"/>
</dbReference>